<feature type="chain" id="PRO_0000067661" description="Urease accessory protein UreG">
    <location>
        <begin position="1"/>
        <end position="204"/>
    </location>
</feature>
<feature type="binding site" evidence="1">
    <location>
        <begin position="10"/>
        <end position="17"/>
    </location>
    <ligand>
        <name>GTP</name>
        <dbReference type="ChEBI" id="CHEBI:37565"/>
    </ligand>
</feature>
<sequence>MEPIRIGIGGPVGAGKTMLVEKLTRAMHKELSIAVVTNDIYTKEDAQFLLKHGVLPADRVIGVETGGCPHTAIREDASMNFPAIDELKERHPDLELIFIESGGDNLAATFSPELVDFSIYIIDVAQGEKIPRKGGQGMIKSVLFIINKIDLAPYVGASLEVMERDTLAARGDKPYIFTNLKDEIGLAEVLEWIKTNALLYGLES</sequence>
<reference key="1">
    <citation type="journal article" date="1994" name="J. Bacteriol.">
        <title>Cloning, sequencing, and expression of thermophilic Bacillus sp. strain TB-90 urease gene complex in Escherichia coli.</title>
        <authorList>
            <person name="Maeda M."/>
            <person name="Hidaka M."/>
            <person name="Nakamura A."/>
            <person name="Masaki H."/>
            <person name="Uozumi T."/>
        </authorList>
    </citation>
    <scope>NUCLEOTIDE SEQUENCE [GENOMIC DNA]</scope>
</reference>
<dbReference type="EMBL" id="D14439">
    <property type="protein sequence ID" value="BAA03328.1"/>
    <property type="molecule type" value="Genomic_DNA"/>
</dbReference>
<dbReference type="PIR" id="F36950">
    <property type="entry name" value="F36950"/>
</dbReference>
<dbReference type="SMR" id="Q07403"/>
<dbReference type="GO" id="GO:0005737">
    <property type="term" value="C:cytoplasm"/>
    <property type="evidence" value="ECO:0007669"/>
    <property type="project" value="UniProtKB-SubCell"/>
</dbReference>
<dbReference type="GO" id="GO:0005525">
    <property type="term" value="F:GTP binding"/>
    <property type="evidence" value="ECO:0007669"/>
    <property type="project" value="UniProtKB-KW"/>
</dbReference>
<dbReference type="GO" id="GO:0003924">
    <property type="term" value="F:GTPase activity"/>
    <property type="evidence" value="ECO:0007669"/>
    <property type="project" value="InterPro"/>
</dbReference>
<dbReference type="GO" id="GO:0016151">
    <property type="term" value="F:nickel cation binding"/>
    <property type="evidence" value="ECO:0007669"/>
    <property type="project" value="UniProtKB-UniRule"/>
</dbReference>
<dbReference type="GO" id="GO:0043419">
    <property type="term" value="P:urea catabolic process"/>
    <property type="evidence" value="ECO:0007669"/>
    <property type="project" value="InterPro"/>
</dbReference>
<dbReference type="CDD" id="cd05540">
    <property type="entry name" value="UreG"/>
    <property type="match status" value="1"/>
</dbReference>
<dbReference type="FunFam" id="3.40.50.300:FF:000208">
    <property type="entry name" value="Urease accessory protein UreG"/>
    <property type="match status" value="1"/>
</dbReference>
<dbReference type="Gene3D" id="3.40.50.300">
    <property type="entry name" value="P-loop containing nucleotide triphosphate hydrolases"/>
    <property type="match status" value="1"/>
</dbReference>
<dbReference type="HAMAP" id="MF_01389">
    <property type="entry name" value="UreG"/>
    <property type="match status" value="1"/>
</dbReference>
<dbReference type="InterPro" id="IPR003495">
    <property type="entry name" value="CobW/HypB/UreG_nucleotide-bd"/>
</dbReference>
<dbReference type="InterPro" id="IPR027417">
    <property type="entry name" value="P-loop_NTPase"/>
</dbReference>
<dbReference type="InterPro" id="IPR004400">
    <property type="entry name" value="UreG"/>
</dbReference>
<dbReference type="NCBIfam" id="TIGR00101">
    <property type="entry name" value="ureG"/>
    <property type="match status" value="1"/>
</dbReference>
<dbReference type="PANTHER" id="PTHR31715">
    <property type="entry name" value="UREASE ACCESSORY PROTEIN G"/>
    <property type="match status" value="1"/>
</dbReference>
<dbReference type="PANTHER" id="PTHR31715:SF0">
    <property type="entry name" value="UREASE ACCESSORY PROTEIN G"/>
    <property type="match status" value="1"/>
</dbReference>
<dbReference type="Pfam" id="PF02492">
    <property type="entry name" value="cobW"/>
    <property type="match status" value="1"/>
</dbReference>
<dbReference type="PIRSF" id="PIRSF005624">
    <property type="entry name" value="Ni-bind_GTPase"/>
    <property type="match status" value="1"/>
</dbReference>
<dbReference type="SUPFAM" id="SSF52540">
    <property type="entry name" value="P-loop containing nucleoside triphosphate hydrolases"/>
    <property type="match status" value="1"/>
</dbReference>
<comment type="function">
    <text evidence="1">Facilitates the functional incorporation of the urease nickel metallocenter. This process requires GTP hydrolysis, probably effectuated by UreG.</text>
</comment>
<comment type="subunit">
    <text evidence="1">Homodimer. UreD, UreF and UreG form a complex that acts as a GTP-hydrolysis-dependent molecular chaperone, activating the urease apoprotein by helping to assemble the nickel containing metallocenter of UreC. The UreE protein probably delivers the nickel.</text>
</comment>
<comment type="subcellular location">
    <subcellularLocation>
        <location evidence="1">Cytoplasm</location>
    </subcellularLocation>
</comment>
<comment type="similarity">
    <text evidence="1">Belongs to the SIMIBI class G3E GTPase family. UreG subfamily.</text>
</comment>
<proteinExistence type="inferred from homology"/>
<keyword id="KW-0143">Chaperone</keyword>
<keyword id="KW-0963">Cytoplasm</keyword>
<keyword id="KW-0342">GTP-binding</keyword>
<keyword id="KW-0996">Nickel insertion</keyword>
<keyword id="KW-0547">Nucleotide-binding</keyword>
<accession>Q07403</accession>
<protein>
    <recommendedName>
        <fullName evidence="1">Urease accessory protein UreG</fullName>
    </recommendedName>
</protein>
<name>UREG_BACSB</name>
<organism>
    <name type="scientific">Bacillus sp. (strain TB-90)</name>
    <dbReference type="NCBI Taxonomy" id="36824"/>
    <lineage>
        <taxon>Bacteria</taxon>
        <taxon>Bacillati</taxon>
        <taxon>Bacillota</taxon>
        <taxon>Bacilli</taxon>
        <taxon>Bacillales</taxon>
        <taxon>Bacillaceae</taxon>
        <taxon>Bacillus</taxon>
    </lineage>
</organism>
<gene>
    <name evidence="1" type="primary">ureG</name>
</gene>
<evidence type="ECO:0000255" key="1">
    <source>
        <dbReference type="HAMAP-Rule" id="MF_01389"/>
    </source>
</evidence>